<proteinExistence type="inferred from homology"/>
<protein>
    <recommendedName>
        <fullName>Uncharacterized protein Ta1105</fullName>
    </recommendedName>
</protein>
<gene>
    <name type="ordered locus">Ta1105</name>
</gene>
<dbReference type="EMBL" id="AL445066">
    <property type="protein sequence ID" value="CAC12232.1"/>
    <property type="status" value="ALT_INIT"/>
    <property type="molecule type" value="Genomic_DNA"/>
</dbReference>
<dbReference type="SMR" id="Q9HJ67"/>
<dbReference type="FunCoup" id="Q9HJ67">
    <property type="interactions" value="47"/>
</dbReference>
<dbReference type="STRING" id="273075.gene:9572326"/>
<dbReference type="PaxDb" id="273075-Ta1105"/>
<dbReference type="EnsemblBacteria" id="CAC12232">
    <property type="protein sequence ID" value="CAC12232"/>
    <property type="gene ID" value="CAC12232"/>
</dbReference>
<dbReference type="KEGG" id="tac:Ta1105"/>
<dbReference type="eggNOG" id="arCOG04225">
    <property type="taxonomic scope" value="Archaea"/>
</dbReference>
<dbReference type="HOGENOM" id="CLU_046550_5_1_2"/>
<dbReference type="InParanoid" id="Q9HJ67"/>
<dbReference type="Proteomes" id="UP000001024">
    <property type="component" value="Chromosome"/>
</dbReference>
<dbReference type="CDD" id="cd02908">
    <property type="entry name" value="Macro_OAADPr_deacetylase"/>
    <property type="match status" value="1"/>
</dbReference>
<dbReference type="Gene3D" id="3.40.220.10">
    <property type="entry name" value="Leucine Aminopeptidase, subunit E, domain 1"/>
    <property type="match status" value="1"/>
</dbReference>
<dbReference type="InterPro" id="IPR002589">
    <property type="entry name" value="Macro_dom"/>
</dbReference>
<dbReference type="InterPro" id="IPR043472">
    <property type="entry name" value="Macro_dom-like"/>
</dbReference>
<dbReference type="PANTHER" id="PTHR11106">
    <property type="entry name" value="GANGLIOSIDE INDUCED DIFFERENTIATION ASSOCIATED PROTEIN 2-RELATED"/>
    <property type="match status" value="1"/>
</dbReference>
<dbReference type="PANTHER" id="PTHR11106:SF27">
    <property type="entry name" value="MACRO DOMAIN-CONTAINING PROTEIN"/>
    <property type="match status" value="1"/>
</dbReference>
<dbReference type="Pfam" id="PF01661">
    <property type="entry name" value="Macro"/>
    <property type="match status" value="1"/>
</dbReference>
<dbReference type="SMART" id="SM00506">
    <property type="entry name" value="A1pp"/>
    <property type="match status" value="1"/>
</dbReference>
<dbReference type="SUPFAM" id="SSF52949">
    <property type="entry name" value="Macro domain-like"/>
    <property type="match status" value="1"/>
</dbReference>
<dbReference type="PROSITE" id="PS51154">
    <property type="entry name" value="MACRO"/>
    <property type="match status" value="1"/>
</dbReference>
<name>Y1105_THEAC</name>
<evidence type="ECO:0000255" key="1">
    <source>
        <dbReference type="PROSITE-ProRule" id="PRU00490"/>
    </source>
</evidence>
<evidence type="ECO:0000305" key="2"/>
<comment type="similarity">
    <text evidence="2">Belongs to the MacroD-type family.</text>
</comment>
<comment type="sequence caution" evidence="2">
    <conflict type="erroneous initiation">
        <sequence resource="EMBL-CDS" id="CAC12232"/>
    </conflict>
    <text>Extended N-terminus.</text>
</comment>
<accession>Q9HJ67</accession>
<keyword id="KW-1185">Reference proteome</keyword>
<organism>
    <name type="scientific">Thermoplasma acidophilum (strain ATCC 25905 / DSM 1728 / JCM 9062 / NBRC 15155 / AMRC-C165)</name>
    <dbReference type="NCBI Taxonomy" id="273075"/>
    <lineage>
        <taxon>Archaea</taxon>
        <taxon>Methanobacteriati</taxon>
        <taxon>Thermoplasmatota</taxon>
        <taxon>Thermoplasmata</taxon>
        <taxon>Thermoplasmatales</taxon>
        <taxon>Thermoplasmataceae</taxon>
        <taxon>Thermoplasma</taxon>
    </lineage>
</organism>
<sequence>MREFHYGVHMLAVEVGDITESDAEAIVNAANSSLMGGGGVDGAIHSAAGPELNGELVKIRRERYPNGLPPGEAVITRGYRLKASHIIHTVGPVWMGGRNGEDDVLYRSYRSCLDLAREFGIHDIAFPALSTGAYGFPFDRAERIAIRSVIDFLKDESAGYTVRFVFYTEDQGKRFLFILSDLGLPVNWNRDVQENT</sequence>
<reference key="1">
    <citation type="journal article" date="2000" name="Nature">
        <title>The genome sequence of the thermoacidophilic scavenger Thermoplasma acidophilum.</title>
        <authorList>
            <person name="Ruepp A."/>
            <person name="Graml W."/>
            <person name="Santos-Martinez M.-L."/>
            <person name="Koretke K.K."/>
            <person name="Volker C."/>
            <person name="Mewes H.-W."/>
            <person name="Frishman D."/>
            <person name="Stocker S."/>
            <person name="Lupas A.N."/>
            <person name="Baumeister W."/>
        </authorList>
    </citation>
    <scope>NUCLEOTIDE SEQUENCE [LARGE SCALE GENOMIC DNA]</scope>
    <source>
        <strain>ATCC 25905 / DSM 1728 / JCM 9062 / NBRC 15155 / AMRC-C165</strain>
    </source>
</reference>
<feature type="chain" id="PRO_0000089239" description="Uncharacterized protein Ta1105">
    <location>
        <begin position="1"/>
        <end position="196"/>
    </location>
</feature>
<feature type="domain" description="Macro" evidence="1">
    <location>
        <begin position="1"/>
        <end position="183"/>
    </location>
</feature>